<dbReference type="EMBL" id="BA000017">
    <property type="protein sequence ID" value="BAB57267.1"/>
    <property type="molecule type" value="Genomic_DNA"/>
</dbReference>
<dbReference type="RefSeq" id="WP_001060837.1">
    <property type="nucleotide sequence ID" value="NC_002758.2"/>
</dbReference>
<dbReference type="SMR" id="Q931T9"/>
<dbReference type="KEGG" id="sav:SAV1105"/>
<dbReference type="HOGENOM" id="CLU_020088_2_0_9"/>
<dbReference type="PhylomeDB" id="Q931T9"/>
<dbReference type="Proteomes" id="UP000002481">
    <property type="component" value="Chromosome"/>
</dbReference>
<dbReference type="GO" id="GO:0005886">
    <property type="term" value="C:plasma membrane"/>
    <property type="evidence" value="ECO:0007669"/>
    <property type="project" value="UniProtKB-SubCell"/>
</dbReference>
<dbReference type="GO" id="GO:0015086">
    <property type="term" value="F:cadmium ion transmembrane transporter activity"/>
    <property type="evidence" value="ECO:0007669"/>
    <property type="project" value="TreeGrafter"/>
</dbReference>
<dbReference type="GO" id="GO:0005384">
    <property type="term" value="F:manganese ion transmembrane transporter activity"/>
    <property type="evidence" value="ECO:0007669"/>
    <property type="project" value="TreeGrafter"/>
</dbReference>
<dbReference type="GO" id="GO:0046872">
    <property type="term" value="F:metal ion binding"/>
    <property type="evidence" value="ECO:0007669"/>
    <property type="project" value="UniProtKB-UniRule"/>
</dbReference>
<dbReference type="GO" id="GO:0015293">
    <property type="term" value="F:symporter activity"/>
    <property type="evidence" value="ECO:0007669"/>
    <property type="project" value="UniProtKB-UniRule"/>
</dbReference>
<dbReference type="GO" id="GO:0034755">
    <property type="term" value="P:iron ion transmembrane transport"/>
    <property type="evidence" value="ECO:0007669"/>
    <property type="project" value="TreeGrafter"/>
</dbReference>
<dbReference type="HAMAP" id="MF_00221">
    <property type="entry name" value="NRAMP"/>
    <property type="match status" value="1"/>
</dbReference>
<dbReference type="InterPro" id="IPR001046">
    <property type="entry name" value="NRAMP_fam"/>
</dbReference>
<dbReference type="NCBIfam" id="TIGR01197">
    <property type="entry name" value="nramp"/>
    <property type="match status" value="1"/>
</dbReference>
<dbReference type="NCBIfam" id="NF037982">
    <property type="entry name" value="Nramp_1"/>
    <property type="match status" value="1"/>
</dbReference>
<dbReference type="NCBIfam" id="NF001923">
    <property type="entry name" value="PRK00701.1"/>
    <property type="match status" value="1"/>
</dbReference>
<dbReference type="PANTHER" id="PTHR11706:SF33">
    <property type="entry name" value="NATURAL RESISTANCE-ASSOCIATED MACROPHAGE PROTEIN 2"/>
    <property type="match status" value="1"/>
</dbReference>
<dbReference type="PANTHER" id="PTHR11706">
    <property type="entry name" value="SOLUTE CARRIER PROTEIN FAMILY 11 MEMBER"/>
    <property type="match status" value="1"/>
</dbReference>
<dbReference type="Pfam" id="PF01566">
    <property type="entry name" value="Nramp"/>
    <property type="match status" value="1"/>
</dbReference>
<dbReference type="PRINTS" id="PR00447">
    <property type="entry name" value="NATRESASSCMP"/>
</dbReference>
<evidence type="ECO:0000255" key="1">
    <source>
        <dbReference type="HAMAP-Rule" id="MF_00221"/>
    </source>
</evidence>
<protein>
    <recommendedName>
        <fullName evidence="1">Divalent metal cation transporter MntH</fullName>
    </recommendedName>
</protein>
<proteinExistence type="inferred from homology"/>
<keyword id="KW-1003">Cell membrane</keyword>
<keyword id="KW-0406">Ion transport</keyword>
<keyword id="KW-0472">Membrane</keyword>
<keyword id="KW-0769">Symport</keyword>
<keyword id="KW-0812">Transmembrane</keyword>
<keyword id="KW-1133">Transmembrane helix</keyword>
<keyword id="KW-0813">Transport</keyword>
<accession>Q931T9</accession>
<gene>
    <name evidence="1" type="primary">mntH</name>
    <name type="ordered locus">SAV1105</name>
</gene>
<name>MNTH_STAAM</name>
<reference key="1">
    <citation type="journal article" date="2001" name="Lancet">
        <title>Whole genome sequencing of meticillin-resistant Staphylococcus aureus.</title>
        <authorList>
            <person name="Kuroda M."/>
            <person name="Ohta T."/>
            <person name="Uchiyama I."/>
            <person name="Baba T."/>
            <person name="Yuzawa H."/>
            <person name="Kobayashi I."/>
            <person name="Cui L."/>
            <person name="Oguchi A."/>
            <person name="Aoki K."/>
            <person name="Nagai Y."/>
            <person name="Lian J.-Q."/>
            <person name="Ito T."/>
            <person name="Kanamori M."/>
            <person name="Matsumaru H."/>
            <person name="Maruyama A."/>
            <person name="Murakami H."/>
            <person name="Hosoyama A."/>
            <person name="Mizutani-Ui Y."/>
            <person name="Takahashi N.K."/>
            <person name="Sawano T."/>
            <person name="Inoue R."/>
            <person name="Kaito C."/>
            <person name="Sekimizu K."/>
            <person name="Hirakawa H."/>
            <person name="Kuhara S."/>
            <person name="Goto S."/>
            <person name="Yabuzaki J."/>
            <person name="Kanehisa M."/>
            <person name="Yamashita A."/>
            <person name="Oshima K."/>
            <person name="Furuya K."/>
            <person name="Yoshino C."/>
            <person name="Shiba T."/>
            <person name="Hattori M."/>
            <person name="Ogasawara N."/>
            <person name="Hayashi H."/>
            <person name="Hiramatsu K."/>
        </authorList>
    </citation>
    <scope>NUCLEOTIDE SEQUENCE [LARGE SCALE GENOMIC DNA]</scope>
    <source>
        <strain>Mu50 / ATCC 700699</strain>
    </source>
</reference>
<organism>
    <name type="scientific">Staphylococcus aureus (strain Mu50 / ATCC 700699)</name>
    <dbReference type="NCBI Taxonomy" id="158878"/>
    <lineage>
        <taxon>Bacteria</taxon>
        <taxon>Bacillati</taxon>
        <taxon>Bacillota</taxon>
        <taxon>Bacilli</taxon>
        <taxon>Bacillales</taxon>
        <taxon>Staphylococcaceae</taxon>
        <taxon>Staphylococcus</taxon>
    </lineage>
</organism>
<feature type="chain" id="PRO_0000212635" description="Divalent metal cation transporter MntH">
    <location>
        <begin position="1"/>
        <end position="450"/>
    </location>
</feature>
<feature type="transmembrane region" description="Helical" evidence="1">
    <location>
        <begin position="34"/>
        <end position="54"/>
    </location>
</feature>
<feature type="transmembrane region" description="Helical" evidence="1">
    <location>
        <begin position="61"/>
        <end position="81"/>
    </location>
</feature>
<feature type="transmembrane region" description="Helical" evidence="1">
    <location>
        <begin position="108"/>
        <end position="128"/>
    </location>
</feature>
<feature type="transmembrane region" description="Helical" evidence="1">
    <location>
        <begin position="141"/>
        <end position="161"/>
    </location>
</feature>
<feature type="transmembrane region" description="Helical" evidence="1">
    <location>
        <begin position="170"/>
        <end position="190"/>
    </location>
</feature>
<feature type="transmembrane region" description="Helical" evidence="1">
    <location>
        <begin position="212"/>
        <end position="232"/>
    </location>
</feature>
<feature type="transmembrane region" description="Helical" evidence="1">
    <location>
        <begin position="263"/>
        <end position="283"/>
    </location>
</feature>
<feature type="transmembrane region" description="Helical" evidence="1">
    <location>
        <begin position="305"/>
        <end position="325"/>
    </location>
</feature>
<feature type="transmembrane region" description="Helical" evidence="1">
    <location>
        <begin position="361"/>
        <end position="381"/>
    </location>
</feature>
<feature type="transmembrane region" description="Helical" evidence="1">
    <location>
        <begin position="383"/>
        <end position="403"/>
    </location>
</feature>
<feature type="transmembrane region" description="Helical" evidence="1">
    <location>
        <begin position="422"/>
        <end position="442"/>
    </location>
</feature>
<sequence>MNNKRHSTNEQLSLDEINNTIKFDHRSSNKQKFLSFLGPGLLVAVGYMDPGNWITSMQGGAQYGYTLLFVILISSLSAMLLQSMTVRLGIATGMDLAQMTRHYLSRPIAIIFWIIAELAIIATDIAEVIGSAIALNLLFNIPLIVGALITVLDVFLLLFIMKYGFRKIEAIVGTFIFTVLFIFIFEVYISSPQLNAVLNGFIPHSEIITNNGILYIALGIIGATIMPHNLYLHSSIVQSRTYSRHNNEEKAQAIKFATIDSNIQLSIAFVVNCLLLVLGASLFFNSNADDLGGFYDLYHALKTEPVLGATMGAIMSTLFAVALLASGQNSTITGTLAGQIVMEGFLRLHIPNWLRRLITRSLAVIPVIVCLIIFKGNAAKIEQLLVFSQVFLSIALPFCLIPLQLATSNKDLMGPFYNKTWVNIISWTLIIILSILNVYLIVQTFQELQS</sequence>
<comment type="function">
    <text evidence="1">H(+)-stimulated, divalent metal cation uptake system.</text>
</comment>
<comment type="subcellular location">
    <subcellularLocation>
        <location evidence="1">Cell membrane</location>
        <topology evidence="1">Multi-pass membrane protein</topology>
    </subcellularLocation>
</comment>
<comment type="similarity">
    <text evidence="1">Belongs to the NRAMP family.</text>
</comment>